<proteinExistence type="evidence at protein level"/>
<gene>
    <name type="primary">HBA</name>
</gene>
<evidence type="ECO:0000250" key="1">
    <source>
        <dbReference type="UniProtKB" id="P01942"/>
    </source>
</evidence>
<evidence type="ECO:0000250" key="2">
    <source>
        <dbReference type="UniProtKB" id="P01946"/>
    </source>
</evidence>
<evidence type="ECO:0000250" key="3">
    <source>
        <dbReference type="UniProtKB" id="P69905"/>
    </source>
</evidence>
<evidence type="ECO:0000255" key="4">
    <source>
        <dbReference type="PROSITE-ProRule" id="PRU00238"/>
    </source>
</evidence>
<feature type="chain" id="PRO_0000052776" description="Hemoglobin subunit alpha">
    <location>
        <begin position="1"/>
        <end position="141"/>
    </location>
</feature>
<feature type="peptide" id="PRO_0000455949" description="Hemopressin" evidence="2">
    <location>
        <begin position="95"/>
        <end position="103"/>
    </location>
</feature>
<feature type="domain" description="Globin" evidence="4">
    <location>
        <begin position="1"/>
        <end position="141"/>
    </location>
</feature>
<feature type="binding site" evidence="4">
    <location>
        <position position="58"/>
    </location>
    <ligand>
        <name>O2</name>
        <dbReference type="ChEBI" id="CHEBI:15379"/>
    </ligand>
</feature>
<feature type="binding site" description="proximal binding residue" evidence="4">
    <location>
        <position position="87"/>
    </location>
    <ligand>
        <name>heme b</name>
        <dbReference type="ChEBI" id="CHEBI:60344"/>
    </ligand>
    <ligandPart>
        <name>Fe</name>
        <dbReference type="ChEBI" id="CHEBI:18248"/>
    </ligandPart>
</feature>
<feature type="modified residue" description="Phosphoserine" evidence="3">
    <location>
        <position position="3"/>
    </location>
</feature>
<feature type="modified residue" description="N6-succinyllysine" evidence="1">
    <location>
        <position position="7"/>
    </location>
</feature>
<feature type="modified residue" description="N6-succinyllysine" evidence="1">
    <location>
        <position position="11"/>
    </location>
</feature>
<feature type="modified residue" description="N6-acetyllysine; alternate" evidence="3">
    <location>
        <position position="16"/>
    </location>
</feature>
<feature type="modified residue" description="N6-succinyllysine; alternate" evidence="1">
    <location>
        <position position="16"/>
    </location>
</feature>
<feature type="modified residue" description="Phosphotyrosine" evidence="3">
    <location>
        <position position="24"/>
    </location>
</feature>
<feature type="modified residue" description="Phosphoserine" evidence="3">
    <location>
        <position position="35"/>
    </location>
</feature>
<feature type="modified residue" description="N6-succinyllysine" evidence="1">
    <location>
        <position position="40"/>
    </location>
</feature>
<feature type="modified residue" description="Phosphoserine" evidence="3">
    <location>
        <position position="49"/>
    </location>
</feature>
<feature type="modified residue" description="Phosphoserine" evidence="1">
    <location>
        <position position="102"/>
    </location>
</feature>
<feature type="modified residue" description="Phosphothreonine" evidence="1">
    <location>
        <position position="108"/>
    </location>
</feature>
<feature type="modified residue" description="Phosphoserine" evidence="1">
    <location>
        <position position="124"/>
    </location>
</feature>
<feature type="modified residue" description="Phosphothreonine" evidence="1">
    <location>
        <position position="134"/>
    </location>
</feature>
<feature type="modified residue" description="Phosphothreonine" evidence="1">
    <location>
        <position position="137"/>
    </location>
</feature>
<feature type="modified residue" description="Phosphoserine" evidence="1">
    <location>
        <position position="138"/>
    </location>
</feature>
<accession>P01951</accession>
<reference key="1">
    <citation type="journal article" date="1981" name="Hoppe-Seyler's Z. Physiol. Chem.">
        <title>Hemoglobins, XLIII. The primary structure of mole hemoglobin (Talpa europaea).</title>
        <authorList>
            <person name="Kleinschmidt T."/>
            <person name="Jelkmann W."/>
            <person name="Braunitzer G."/>
        </authorList>
    </citation>
    <scope>PROTEIN SEQUENCE</scope>
</reference>
<sequence length="141" mass="15188">VLSGTDKSNIKAAWDKVGAHAGEYGAEALERTFTSFPTTKTYFPHFDLSHGSAQVKAHGKKVADALTNAVGHLDDLPGAMSALSDLHAHKLRVDPVNFKLLSHCLLVTLACHHPNDFTPAVHASLDKFLATVSTVLTSKYR</sequence>
<comment type="function">
    <text>Involved in oxygen transport from the lung to the various peripheral tissues.</text>
</comment>
<comment type="function">
    <molecule>Hemopressin</molecule>
    <text evidence="2">Hemopressin acts as an antagonist peptide of the cannabinoid receptor CNR1. Hemopressin-binding efficiently blocks cannabinoid receptor CNR1 and subsequent signaling.</text>
</comment>
<comment type="subunit">
    <text>Heterotetramer of two alpha chains and two beta chains.</text>
</comment>
<comment type="tissue specificity">
    <text>Red blood cells.</text>
</comment>
<comment type="similarity">
    <text evidence="4">Belongs to the globin family.</text>
</comment>
<organism>
    <name type="scientific">Talpa europaea</name>
    <name type="common">European mole</name>
    <dbReference type="NCBI Taxonomy" id="9375"/>
    <lineage>
        <taxon>Eukaryota</taxon>
        <taxon>Metazoa</taxon>
        <taxon>Chordata</taxon>
        <taxon>Craniata</taxon>
        <taxon>Vertebrata</taxon>
        <taxon>Euteleostomi</taxon>
        <taxon>Mammalia</taxon>
        <taxon>Eutheria</taxon>
        <taxon>Laurasiatheria</taxon>
        <taxon>Eulipotyphla</taxon>
        <taxon>Talpidae</taxon>
        <taxon>Talpa</taxon>
    </lineage>
</organism>
<protein>
    <recommendedName>
        <fullName>Hemoglobin subunit alpha</fullName>
    </recommendedName>
    <alternativeName>
        <fullName>Alpha-globin</fullName>
    </alternativeName>
    <alternativeName>
        <fullName>Hemoglobin alpha chain</fullName>
    </alternativeName>
    <component>
        <recommendedName>
            <fullName evidence="2">Hemopressin</fullName>
        </recommendedName>
    </component>
</protein>
<keyword id="KW-0007">Acetylation</keyword>
<keyword id="KW-0903">Direct protein sequencing</keyword>
<keyword id="KW-0349">Heme</keyword>
<keyword id="KW-0408">Iron</keyword>
<keyword id="KW-0479">Metal-binding</keyword>
<keyword id="KW-0561">Oxygen transport</keyword>
<keyword id="KW-0597">Phosphoprotein</keyword>
<keyword id="KW-0813">Transport</keyword>
<dbReference type="PIR" id="A02273">
    <property type="entry name" value="HAOEE"/>
</dbReference>
<dbReference type="SMR" id="P01951"/>
<dbReference type="GO" id="GO:0072562">
    <property type="term" value="C:blood microparticle"/>
    <property type="evidence" value="ECO:0007669"/>
    <property type="project" value="TreeGrafter"/>
</dbReference>
<dbReference type="GO" id="GO:0031838">
    <property type="term" value="C:haptoglobin-hemoglobin complex"/>
    <property type="evidence" value="ECO:0007669"/>
    <property type="project" value="TreeGrafter"/>
</dbReference>
<dbReference type="GO" id="GO:0005833">
    <property type="term" value="C:hemoglobin complex"/>
    <property type="evidence" value="ECO:0007669"/>
    <property type="project" value="InterPro"/>
</dbReference>
<dbReference type="GO" id="GO:0031720">
    <property type="term" value="F:haptoglobin binding"/>
    <property type="evidence" value="ECO:0007669"/>
    <property type="project" value="TreeGrafter"/>
</dbReference>
<dbReference type="GO" id="GO:0020037">
    <property type="term" value="F:heme binding"/>
    <property type="evidence" value="ECO:0007669"/>
    <property type="project" value="InterPro"/>
</dbReference>
<dbReference type="GO" id="GO:0005506">
    <property type="term" value="F:iron ion binding"/>
    <property type="evidence" value="ECO:0007669"/>
    <property type="project" value="InterPro"/>
</dbReference>
<dbReference type="GO" id="GO:0043177">
    <property type="term" value="F:organic acid binding"/>
    <property type="evidence" value="ECO:0007669"/>
    <property type="project" value="TreeGrafter"/>
</dbReference>
<dbReference type="GO" id="GO:0019825">
    <property type="term" value="F:oxygen binding"/>
    <property type="evidence" value="ECO:0007669"/>
    <property type="project" value="InterPro"/>
</dbReference>
<dbReference type="GO" id="GO:0005344">
    <property type="term" value="F:oxygen carrier activity"/>
    <property type="evidence" value="ECO:0007669"/>
    <property type="project" value="UniProtKB-KW"/>
</dbReference>
<dbReference type="GO" id="GO:0004601">
    <property type="term" value="F:peroxidase activity"/>
    <property type="evidence" value="ECO:0007669"/>
    <property type="project" value="TreeGrafter"/>
</dbReference>
<dbReference type="GO" id="GO:0042744">
    <property type="term" value="P:hydrogen peroxide catabolic process"/>
    <property type="evidence" value="ECO:0007669"/>
    <property type="project" value="TreeGrafter"/>
</dbReference>
<dbReference type="CDD" id="cd08927">
    <property type="entry name" value="Hb-alpha-like"/>
    <property type="match status" value="1"/>
</dbReference>
<dbReference type="FunFam" id="1.10.490.10:FF:000002">
    <property type="entry name" value="Hemoglobin subunit alpha"/>
    <property type="match status" value="1"/>
</dbReference>
<dbReference type="Gene3D" id="1.10.490.10">
    <property type="entry name" value="Globins"/>
    <property type="match status" value="1"/>
</dbReference>
<dbReference type="InterPro" id="IPR000971">
    <property type="entry name" value="Globin"/>
</dbReference>
<dbReference type="InterPro" id="IPR009050">
    <property type="entry name" value="Globin-like_sf"/>
</dbReference>
<dbReference type="InterPro" id="IPR012292">
    <property type="entry name" value="Globin/Proto"/>
</dbReference>
<dbReference type="InterPro" id="IPR002338">
    <property type="entry name" value="Hemoglobin_a-typ"/>
</dbReference>
<dbReference type="InterPro" id="IPR050056">
    <property type="entry name" value="Hemoglobin_oxygen_transport"/>
</dbReference>
<dbReference type="InterPro" id="IPR002339">
    <property type="entry name" value="Hemoglobin_pi"/>
</dbReference>
<dbReference type="PANTHER" id="PTHR11442">
    <property type="entry name" value="HEMOGLOBIN FAMILY MEMBER"/>
    <property type="match status" value="1"/>
</dbReference>
<dbReference type="PANTHER" id="PTHR11442:SF48">
    <property type="entry name" value="HEMOGLOBIN SUBUNIT ALPHA"/>
    <property type="match status" value="1"/>
</dbReference>
<dbReference type="Pfam" id="PF00042">
    <property type="entry name" value="Globin"/>
    <property type="match status" value="1"/>
</dbReference>
<dbReference type="PRINTS" id="PR00612">
    <property type="entry name" value="ALPHAHAEM"/>
</dbReference>
<dbReference type="PRINTS" id="PR00815">
    <property type="entry name" value="PIHAEM"/>
</dbReference>
<dbReference type="SUPFAM" id="SSF46458">
    <property type="entry name" value="Globin-like"/>
    <property type="match status" value="1"/>
</dbReference>
<dbReference type="PROSITE" id="PS01033">
    <property type="entry name" value="GLOBIN"/>
    <property type="match status" value="1"/>
</dbReference>
<name>HBA_TALEU</name>